<evidence type="ECO:0000256" key="1">
    <source>
        <dbReference type="SAM" id="MobiDB-lite"/>
    </source>
</evidence>
<organism>
    <name type="scientific">Acanthamoeba polyphaga mimivirus</name>
    <name type="common">APMV</name>
    <dbReference type="NCBI Taxonomy" id="212035"/>
    <lineage>
        <taxon>Viruses</taxon>
        <taxon>Varidnaviria</taxon>
        <taxon>Bamfordvirae</taxon>
        <taxon>Nucleocytoviricota</taxon>
        <taxon>Megaviricetes</taxon>
        <taxon>Imitervirales</taxon>
        <taxon>Mimiviridae</taxon>
        <taxon>Megamimivirinae</taxon>
        <taxon>Mimivirus</taxon>
        <taxon>Mimivirus bradfordmassiliense</taxon>
    </lineage>
</organism>
<feature type="chain" id="PRO_0000071365" description="Uncharacterized protein R816">
    <location>
        <begin position="1"/>
        <end position="202"/>
    </location>
</feature>
<feature type="region of interest" description="Disordered" evidence="1">
    <location>
        <begin position="164"/>
        <end position="202"/>
    </location>
</feature>
<feature type="compositionally biased region" description="Acidic residues" evidence="1">
    <location>
        <begin position="165"/>
        <end position="202"/>
    </location>
</feature>
<keyword id="KW-1185">Reference proteome</keyword>
<gene>
    <name type="ordered locus">MIMI_R816</name>
</gene>
<name>YR816_MIMIV</name>
<accession>Q5UQG9</accession>
<dbReference type="EMBL" id="AY653733">
    <property type="protein sequence ID" value="AAV51076.1"/>
    <property type="molecule type" value="Genomic_DNA"/>
</dbReference>
<dbReference type="KEGG" id="vg:9925479"/>
<dbReference type="OrthoDB" id="20563at10239"/>
<dbReference type="Proteomes" id="UP000001134">
    <property type="component" value="Genome"/>
</dbReference>
<reference key="1">
    <citation type="journal article" date="2004" name="Science">
        <title>The 1.2-megabase genome sequence of Mimivirus.</title>
        <authorList>
            <person name="Raoult D."/>
            <person name="Audic S."/>
            <person name="Robert C."/>
            <person name="Abergel C."/>
            <person name="Renesto P."/>
            <person name="Ogata H."/>
            <person name="La Scola B."/>
            <person name="Susan M."/>
            <person name="Claverie J.-M."/>
        </authorList>
    </citation>
    <scope>NUCLEOTIDE SEQUENCE [LARGE SCALE GENOMIC DNA]</scope>
    <source>
        <strain>Rowbotham-Bradford</strain>
    </source>
</reference>
<organismHost>
    <name type="scientific">Acanthamoeba polyphaga</name>
    <name type="common">Amoeba</name>
    <dbReference type="NCBI Taxonomy" id="5757"/>
</organismHost>
<protein>
    <recommendedName>
        <fullName>Uncharacterized protein R816</fullName>
    </recommendedName>
</protein>
<proteinExistence type="predicted"/>
<sequence length="202" mass="23276">MHSLLFCEPGTFSLNDLKKYHSKPTIKVNDEMYNLIKNNTCLVYRDTENVHNAYLFGKLFALHTYQLVAEHFNDIAQTGFLDYELVKKGVWFKKNFDTDKLWDSYECDWDNNDLKKAVKKNNKSILWIGTTDGGDVGAYLYVHKTDGVIDSIIVDNNFFFGNLDTDSEQESDQESDQDSDQESEESDQESDQDSDQDSEGSE</sequence>